<keyword id="KW-0997">Cell inner membrane</keyword>
<keyword id="KW-1003">Cell membrane</keyword>
<keyword id="KW-0133">Cell shape</keyword>
<keyword id="KW-0961">Cell wall biogenesis/degradation</keyword>
<keyword id="KW-0328">Glycosyltransferase</keyword>
<keyword id="KW-0472">Membrane</keyword>
<keyword id="KW-0573">Peptidoglycan synthesis</keyword>
<keyword id="KW-0808">Transferase</keyword>
<keyword id="KW-0812">Transmembrane</keyword>
<keyword id="KW-1133">Transmembrane helix</keyword>
<comment type="function">
    <text evidence="1">Peptidoglycan polymerase that catalyzes glycan chain elongation from lipid-linked precursors.</text>
</comment>
<comment type="catalytic activity">
    <reaction evidence="1">
        <text>[GlcNAc-(1-&gt;4)-Mur2Ac(oyl-L-Ala-gamma-D-Glu-L-Lys-D-Ala-D-Ala)](n)-di-trans,octa-cis-undecaprenyl diphosphate + beta-D-GlcNAc-(1-&gt;4)-Mur2Ac(oyl-L-Ala-gamma-D-Glu-L-Lys-D-Ala-D-Ala)-di-trans,octa-cis-undecaprenyl diphosphate = [GlcNAc-(1-&gt;4)-Mur2Ac(oyl-L-Ala-gamma-D-Glu-L-Lys-D-Ala-D-Ala)](n+1)-di-trans,octa-cis-undecaprenyl diphosphate + di-trans,octa-cis-undecaprenyl diphosphate + H(+)</text>
        <dbReference type="Rhea" id="RHEA:23708"/>
        <dbReference type="Rhea" id="RHEA-COMP:9602"/>
        <dbReference type="Rhea" id="RHEA-COMP:9603"/>
        <dbReference type="ChEBI" id="CHEBI:15378"/>
        <dbReference type="ChEBI" id="CHEBI:58405"/>
        <dbReference type="ChEBI" id="CHEBI:60033"/>
        <dbReference type="ChEBI" id="CHEBI:78435"/>
        <dbReference type="EC" id="2.4.99.28"/>
    </reaction>
</comment>
<comment type="pathway">
    <text evidence="1">Cell wall biogenesis; peptidoglycan biosynthesis.</text>
</comment>
<comment type="subcellular location">
    <subcellularLocation>
        <location evidence="1">Cell inner membrane</location>
        <topology evidence="1">Single-pass membrane protein</topology>
    </subcellularLocation>
</comment>
<comment type="similarity">
    <text evidence="1">Belongs to the glycosyltransferase 51 family.</text>
</comment>
<proteinExistence type="inferred from homology"/>
<sequence>MPKPTARRLNWFRVITAVIMAVLCIAILYQLWMFSLVVWYAYRDPGSSAIMRQELARLRERDPEAELKYQWVPYDRISNTLKQAVVASEDANFTEHDGVEWDAIRKAWEYNQRQAERGRTKMRGGSTITQQLAKNLFLSGSRSYLRKGQELVLAYMIEHVMPKERILELYLNVAEWGVGVFGAEAAARHYYNTSAARLGAGQAARLAAMLPNPRYYDRHRNTGYLNSRTATLTRRMRMVEIP</sequence>
<protein>
    <recommendedName>
        <fullName evidence="1">Biosynthetic peptidoglycan transglycosylase</fullName>
        <ecNumber evidence="1">2.4.99.28</ecNumber>
    </recommendedName>
    <alternativeName>
        <fullName evidence="1">Glycan polymerase</fullName>
    </alternativeName>
    <alternativeName>
        <fullName evidence="1">Peptidoglycan glycosyltransferase MtgA</fullName>
        <shortName evidence="1">PGT</shortName>
    </alternativeName>
</protein>
<dbReference type="EC" id="2.4.99.28" evidence="1"/>
<dbReference type="EMBL" id="BX640450">
    <property type="protein sequence ID" value="CAE34761.1"/>
    <property type="molecule type" value="Genomic_DNA"/>
</dbReference>
<dbReference type="RefSeq" id="WP_003814960.1">
    <property type="nucleotide sequence ID" value="NC_002927.3"/>
</dbReference>
<dbReference type="SMR" id="Q7WF82"/>
<dbReference type="CAZy" id="GT51">
    <property type="family name" value="Glycosyltransferase Family 51"/>
</dbReference>
<dbReference type="GeneID" id="93205724"/>
<dbReference type="KEGG" id="bbr:BB4398"/>
<dbReference type="eggNOG" id="COG0744">
    <property type="taxonomic scope" value="Bacteria"/>
</dbReference>
<dbReference type="HOGENOM" id="CLU_006354_1_0_4"/>
<dbReference type="UniPathway" id="UPA00219"/>
<dbReference type="Proteomes" id="UP000001027">
    <property type="component" value="Chromosome"/>
</dbReference>
<dbReference type="GO" id="GO:0009274">
    <property type="term" value="C:peptidoglycan-based cell wall"/>
    <property type="evidence" value="ECO:0007669"/>
    <property type="project" value="InterPro"/>
</dbReference>
<dbReference type="GO" id="GO:0005886">
    <property type="term" value="C:plasma membrane"/>
    <property type="evidence" value="ECO:0007669"/>
    <property type="project" value="UniProtKB-SubCell"/>
</dbReference>
<dbReference type="GO" id="GO:0016763">
    <property type="term" value="F:pentosyltransferase activity"/>
    <property type="evidence" value="ECO:0007669"/>
    <property type="project" value="InterPro"/>
</dbReference>
<dbReference type="GO" id="GO:0008955">
    <property type="term" value="F:peptidoglycan glycosyltransferase activity"/>
    <property type="evidence" value="ECO:0007669"/>
    <property type="project" value="UniProtKB-UniRule"/>
</dbReference>
<dbReference type="GO" id="GO:0071555">
    <property type="term" value="P:cell wall organization"/>
    <property type="evidence" value="ECO:0007669"/>
    <property type="project" value="UniProtKB-KW"/>
</dbReference>
<dbReference type="GO" id="GO:0009252">
    <property type="term" value="P:peptidoglycan biosynthetic process"/>
    <property type="evidence" value="ECO:0007669"/>
    <property type="project" value="UniProtKB-UniRule"/>
</dbReference>
<dbReference type="GO" id="GO:0008360">
    <property type="term" value="P:regulation of cell shape"/>
    <property type="evidence" value="ECO:0007669"/>
    <property type="project" value="UniProtKB-KW"/>
</dbReference>
<dbReference type="Gene3D" id="1.10.3810.10">
    <property type="entry name" value="Biosynthetic peptidoglycan transglycosylase-like"/>
    <property type="match status" value="1"/>
</dbReference>
<dbReference type="HAMAP" id="MF_00766">
    <property type="entry name" value="PGT_MtgA"/>
    <property type="match status" value="1"/>
</dbReference>
<dbReference type="InterPro" id="IPR001264">
    <property type="entry name" value="Glyco_trans_51"/>
</dbReference>
<dbReference type="InterPro" id="IPR023346">
    <property type="entry name" value="Lysozyme-like_dom_sf"/>
</dbReference>
<dbReference type="InterPro" id="IPR036950">
    <property type="entry name" value="PBP_transglycosylase"/>
</dbReference>
<dbReference type="InterPro" id="IPR011812">
    <property type="entry name" value="Pep_trsgly"/>
</dbReference>
<dbReference type="NCBIfam" id="TIGR02070">
    <property type="entry name" value="mono_pep_trsgly"/>
    <property type="match status" value="1"/>
</dbReference>
<dbReference type="PANTHER" id="PTHR30400:SF0">
    <property type="entry name" value="BIOSYNTHETIC PEPTIDOGLYCAN TRANSGLYCOSYLASE"/>
    <property type="match status" value="1"/>
</dbReference>
<dbReference type="PANTHER" id="PTHR30400">
    <property type="entry name" value="MONOFUNCTIONAL BIOSYNTHETIC PEPTIDOGLYCAN TRANSGLYCOSYLASE"/>
    <property type="match status" value="1"/>
</dbReference>
<dbReference type="Pfam" id="PF00912">
    <property type="entry name" value="Transgly"/>
    <property type="match status" value="1"/>
</dbReference>
<dbReference type="SUPFAM" id="SSF53955">
    <property type="entry name" value="Lysozyme-like"/>
    <property type="match status" value="1"/>
</dbReference>
<gene>
    <name evidence="1" type="primary">mtgA</name>
    <name type="ordered locus">BB4398</name>
</gene>
<feature type="chain" id="PRO_0000083117" description="Biosynthetic peptidoglycan transglycosylase">
    <location>
        <begin position="1"/>
        <end position="242"/>
    </location>
</feature>
<feature type="transmembrane region" description="Helical" evidence="1">
    <location>
        <begin position="18"/>
        <end position="38"/>
    </location>
</feature>
<name>MTGA_BORBR</name>
<evidence type="ECO:0000255" key="1">
    <source>
        <dbReference type="HAMAP-Rule" id="MF_00766"/>
    </source>
</evidence>
<organism>
    <name type="scientific">Bordetella bronchiseptica (strain ATCC BAA-588 / NCTC 13252 / RB50)</name>
    <name type="common">Alcaligenes bronchisepticus</name>
    <dbReference type="NCBI Taxonomy" id="257310"/>
    <lineage>
        <taxon>Bacteria</taxon>
        <taxon>Pseudomonadati</taxon>
        <taxon>Pseudomonadota</taxon>
        <taxon>Betaproteobacteria</taxon>
        <taxon>Burkholderiales</taxon>
        <taxon>Alcaligenaceae</taxon>
        <taxon>Bordetella</taxon>
    </lineage>
</organism>
<accession>Q7WF82</accession>
<reference key="1">
    <citation type="journal article" date="2003" name="Nat. Genet.">
        <title>Comparative analysis of the genome sequences of Bordetella pertussis, Bordetella parapertussis and Bordetella bronchiseptica.</title>
        <authorList>
            <person name="Parkhill J."/>
            <person name="Sebaihia M."/>
            <person name="Preston A."/>
            <person name="Murphy L.D."/>
            <person name="Thomson N.R."/>
            <person name="Harris D.E."/>
            <person name="Holden M.T.G."/>
            <person name="Churcher C.M."/>
            <person name="Bentley S.D."/>
            <person name="Mungall K.L."/>
            <person name="Cerdeno-Tarraga A.-M."/>
            <person name="Temple L."/>
            <person name="James K.D."/>
            <person name="Harris B."/>
            <person name="Quail M.A."/>
            <person name="Achtman M."/>
            <person name="Atkin R."/>
            <person name="Baker S."/>
            <person name="Basham D."/>
            <person name="Bason N."/>
            <person name="Cherevach I."/>
            <person name="Chillingworth T."/>
            <person name="Collins M."/>
            <person name="Cronin A."/>
            <person name="Davis P."/>
            <person name="Doggett J."/>
            <person name="Feltwell T."/>
            <person name="Goble A."/>
            <person name="Hamlin N."/>
            <person name="Hauser H."/>
            <person name="Holroyd S."/>
            <person name="Jagels K."/>
            <person name="Leather S."/>
            <person name="Moule S."/>
            <person name="Norberczak H."/>
            <person name="O'Neil S."/>
            <person name="Ormond D."/>
            <person name="Price C."/>
            <person name="Rabbinowitsch E."/>
            <person name="Rutter S."/>
            <person name="Sanders M."/>
            <person name="Saunders D."/>
            <person name="Seeger K."/>
            <person name="Sharp S."/>
            <person name="Simmonds M."/>
            <person name="Skelton J."/>
            <person name="Squares R."/>
            <person name="Squares S."/>
            <person name="Stevens K."/>
            <person name="Unwin L."/>
            <person name="Whitehead S."/>
            <person name="Barrell B.G."/>
            <person name="Maskell D.J."/>
        </authorList>
    </citation>
    <scope>NUCLEOTIDE SEQUENCE [LARGE SCALE GENOMIC DNA]</scope>
    <source>
        <strain>ATCC BAA-588 / NCTC 13252 / RB50</strain>
    </source>
</reference>